<comment type="function">
    <text evidence="1">Necessary for formate dehydrogenase activity.</text>
</comment>
<comment type="subcellular location">
    <subcellularLocation>
        <location evidence="1">Cytoplasm</location>
    </subcellularLocation>
</comment>
<comment type="similarity">
    <text evidence="1">Belongs to the FdhE family.</text>
</comment>
<feature type="chain" id="PRO_1000056721" description="Protein FdhE homolog">
    <location>
        <begin position="1"/>
        <end position="309"/>
    </location>
</feature>
<name>FDHE_YERPP</name>
<evidence type="ECO:0000255" key="1">
    <source>
        <dbReference type="HAMAP-Rule" id="MF_00611"/>
    </source>
</evidence>
<protein>
    <recommendedName>
        <fullName evidence="1">Protein FdhE homolog</fullName>
    </recommendedName>
</protein>
<proteinExistence type="inferred from homology"/>
<reference key="1">
    <citation type="submission" date="2007-02" db="EMBL/GenBank/DDBJ databases">
        <title>Complete sequence of chromosome of Yersinia pestis Pestoides F.</title>
        <authorList>
            <consortium name="US DOE Joint Genome Institute"/>
            <person name="Copeland A."/>
            <person name="Lucas S."/>
            <person name="Lapidus A."/>
            <person name="Barry K."/>
            <person name="Detter J.C."/>
            <person name="Glavina del Rio T."/>
            <person name="Hammon N."/>
            <person name="Israni S."/>
            <person name="Dalin E."/>
            <person name="Tice H."/>
            <person name="Pitluck S."/>
            <person name="Di Bartolo G."/>
            <person name="Chain P."/>
            <person name="Malfatti S."/>
            <person name="Shin M."/>
            <person name="Vergez L."/>
            <person name="Schmutz J."/>
            <person name="Larimer F."/>
            <person name="Land M."/>
            <person name="Hauser L."/>
            <person name="Worsham P."/>
            <person name="Chu M."/>
            <person name="Bearden S."/>
            <person name="Garcia E."/>
            <person name="Richardson P."/>
        </authorList>
    </citation>
    <scope>NUCLEOTIDE SEQUENCE [LARGE SCALE GENOMIC DNA]</scope>
    <source>
        <strain>Pestoides F</strain>
    </source>
</reference>
<keyword id="KW-0963">Cytoplasm</keyword>
<dbReference type="EMBL" id="CP000668">
    <property type="protein sequence ID" value="ABP38465.1"/>
    <property type="molecule type" value="Genomic_DNA"/>
</dbReference>
<dbReference type="RefSeq" id="WP_002209609.1">
    <property type="nucleotide sequence ID" value="NZ_CP009715.1"/>
</dbReference>
<dbReference type="SMR" id="A4TGQ2"/>
<dbReference type="GeneID" id="57974659"/>
<dbReference type="KEGG" id="ypp:YPDSF_0038"/>
<dbReference type="PATRIC" id="fig|386656.14.peg.535"/>
<dbReference type="GO" id="GO:0005829">
    <property type="term" value="C:cytosol"/>
    <property type="evidence" value="ECO:0007669"/>
    <property type="project" value="TreeGrafter"/>
</dbReference>
<dbReference type="GO" id="GO:0008199">
    <property type="term" value="F:ferric iron binding"/>
    <property type="evidence" value="ECO:0007669"/>
    <property type="project" value="TreeGrafter"/>
</dbReference>
<dbReference type="GO" id="GO:0051604">
    <property type="term" value="P:protein maturation"/>
    <property type="evidence" value="ECO:0007669"/>
    <property type="project" value="TreeGrafter"/>
</dbReference>
<dbReference type="CDD" id="cd16341">
    <property type="entry name" value="FdhE"/>
    <property type="match status" value="1"/>
</dbReference>
<dbReference type="FunFam" id="3.90.1670.10:FF:000001">
    <property type="entry name" value="Protein FdhE"/>
    <property type="match status" value="1"/>
</dbReference>
<dbReference type="Gene3D" id="3.90.1670.10">
    <property type="entry name" value="FdhE-like domain"/>
    <property type="match status" value="1"/>
</dbReference>
<dbReference type="HAMAP" id="MF_00611">
    <property type="entry name" value="FdeH"/>
    <property type="match status" value="1"/>
</dbReference>
<dbReference type="InterPro" id="IPR024064">
    <property type="entry name" value="FdhE-like_sf"/>
</dbReference>
<dbReference type="InterPro" id="IPR056796">
    <property type="entry name" value="FdhE_C"/>
</dbReference>
<dbReference type="InterPro" id="IPR056797">
    <property type="entry name" value="FdhE_central"/>
</dbReference>
<dbReference type="InterPro" id="IPR056774">
    <property type="entry name" value="FdhE_N"/>
</dbReference>
<dbReference type="InterPro" id="IPR006452">
    <property type="entry name" value="Formate_DH_accessory"/>
</dbReference>
<dbReference type="NCBIfam" id="TIGR01562">
    <property type="entry name" value="FdhE"/>
    <property type="match status" value="1"/>
</dbReference>
<dbReference type="NCBIfam" id="NF002925">
    <property type="entry name" value="PRK03564.1"/>
    <property type="match status" value="1"/>
</dbReference>
<dbReference type="PANTHER" id="PTHR37689">
    <property type="entry name" value="PROTEIN FDHE"/>
    <property type="match status" value="1"/>
</dbReference>
<dbReference type="PANTHER" id="PTHR37689:SF1">
    <property type="entry name" value="PROTEIN FDHE"/>
    <property type="match status" value="1"/>
</dbReference>
<dbReference type="Pfam" id="PF24860">
    <property type="entry name" value="FdhE_C"/>
    <property type="match status" value="1"/>
</dbReference>
<dbReference type="Pfam" id="PF24859">
    <property type="entry name" value="FdhE_central"/>
    <property type="match status" value="1"/>
</dbReference>
<dbReference type="Pfam" id="PF04216">
    <property type="entry name" value="FdhE_N"/>
    <property type="match status" value="1"/>
</dbReference>
<dbReference type="PIRSF" id="PIRSF018296">
    <property type="entry name" value="Format_dh_formtn"/>
    <property type="match status" value="1"/>
</dbReference>
<dbReference type="SUPFAM" id="SSF144020">
    <property type="entry name" value="FdhE-like"/>
    <property type="match status" value="1"/>
</dbReference>
<accession>A4TGQ2</accession>
<sequence length="309" mass="34405">MSIRIVPKDQLGKQREKGTTAGNIPPLLFANLKSLYTRRTERLQQLALDNPLADYLDFAAKITEAQQKALHDHPLVLDMQAELVQSAASGKPPLDGSVFPRTEHWRKLLSALIAELRHDAPDHILAVLDNLDKASVHELELYADALLNRDFSQVGSEKAPFIWAALSLYWAQMASQIPGKARAEYGEHRQFCPVCGSIPVSSVVHIGTHNGLRYLHCNLCESEWHVVRIKCSNCEQTRDLNYWSLDSELAAVKAESCGDCGTYLKILYQEKDPQVEAVADDLASLILDAKMEGEGFARSSINPFLFPGE</sequence>
<gene>
    <name evidence="1" type="primary">fdhE</name>
    <name type="ordered locus">YPDSF_0038</name>
</gene>
<organism>
    <name type="scientific">Yersinia pestis (strain Pestoides F)</name>
    <dbReference type="NCBI Taxonomy" id="386656"/>
    <lineage>
        <taxon>Bacteria</taxon>
        <taxon>Pseudomonadati</taxon>
        <taxon>Pseudomonadota</taxon>
        <taxon>Gammaproteobacteria</taxon>
        <taxon>Enterobacterales</taxon>
        <taxon>Yersiniaceae</taxon>
        <taxon>Yersinia</taxon>
    </lineage>
</organism>